<dbReference type="EMBL" id="AEMK02000075">
    <property type="status" value="NOT_ANNOTATED_CDS"/>
    <property type="molecule type" value="Genomic_DNA"/>
</dbReference>
<dbReference type="EMBL" id="KU891824">
    <property type="protein sequence ID" value="AMR57225.1"/>
    <property type="molecule type" value="mRNA"/>
</dbReference>
<dbReference type="EMBL" id="F14727">
    <property type="protein sequence ID" value="CAA23212.1"/>
    <property type="molecule type" value="mRNA"/>
</dbReference>
<dbReference type="RefSeq" id="XP_003482912.1">
    <property type="nucleotide sequence ID" value="XM_003482864.4"/>
</dbReference>
<dbReference type="RefSeq" id="XP_003482913.1">
    <property type="nucleotide sequence ID" value="XM_003482865.4"/>
</dbReference>
<dbReference type="RefSeq" id="XP_020921173.1">
    <property type="nucleotide sequence ID" value="XM_021065514.1"/>
</dbReference>
<dbReference type="RefSeq" id="XP_020921174.1">
    <property type="nucleotide sequence ID" value="XM_021065515.1"/>
</dbReference>
<dbReference type="RefSeq" id="XP_020921175.1">
    <property type="nucleotide sequence ID" value="XM_021065516.1"/>
</dbReference>
<dbReference type="PDB" id="3J7O">
    <property type="method" value="EM"/>
    <property type="resolution" value="3.50 A"/>
    <property type="chains" value="T=1-160"/>
</dbReference>
<dbReference type="PDB" id="3J7P">
    <property type="method" value="EM"/>
    <property type="resolution" value="3.50 A"/>
    <property type="chains" value="T=1-160"/>
</dbReference>
<dbReference type="PDB" id="3J7Q">
    <property type="method" value="EM"/>
    <property type="resolution" value="3.50 A"/>
    <property type="chains" value="T=1-160"/>
</dbReference>
<dbReference type="PDB" id="3J7R">
    <property type="method" value="EM"/>
    <property type="resolution" value="3.90 A"/>
    <property type="chains" value="T=1-160"/>
</dbReference>
<dbReference type="PDBsum" id="3J7O"/>
<dbReference type="PDBsum" id="3J7P"/>
<dbReference type="PDBsum" id="3J7Q"/>
<dbReference type="PDBsum" id="3J7R"/>
<dbReference type="SMR" id="P49666"/>
<dbReference type="FunCoup" id="P49666">
    <property type="interactions" value="1685"/>
</dbReference>
<dbReference type="STRING" id="9823.ENSSSCP00000058298"/>
<dbReference type="PaxDb" id="9823-ENSSSCP00000009925"/>
<dbReference type="PeptideAtlas" id="P49666"/>
<dbReference type="Ensembl" id="ENSSSCT00000045322.2">
    <property type="protein sequence ID" value="ENSSSCP00000058298.1"/>
    <property type="gene ID" value="ENSSSCG00000009303.4"/>
</dbReference>
<dbReference type="Ensembl" id="ENSSSCT00025068392.1">
    <property type="protein sequence ID" value="ENSSSCP00025029416.1"/>
    <property type="gene ID" value="ENSSSCG00025050118.1"/>
</dbReference>
<dbReference type="Ensembl" id="ENSSSCT00030024726.1">
    <property type="protein sequence ID" value="ENSSSCP00030011043.1"/>
    <property type="gene ID" value="ENSSSCG00030017902.1"/>
</dbReference>
<dbReference type="Ensembl" id="ENSSSCT00035092027.1">
    <property type="protein sequence ID" value="ENSSSCP00035038591.1"/>
    <property type="gene ID" value="ENSSSCG00035068194.1"/>
</dbReference>
<dbReference type="Ensembl" id="ENSSSCT00040017272.1">
    <property type="protein sequence ID" value="ENSSSCP00040007029.1"/>
    <property type="gene ID" value="ENSSSCG00040013019.1"/>
</dbReference>
<dbReference type="Ensembl" id="ENSSSCT00050004765.1">
    <property type="protein sequence ID" value="ENSSSCP00050001927.1"/>
    <property type="gene ID" value="ENSSSCG00050003555.1"/>
</dbReference>
<dbReference type="Ensembl" id="ENSSSCT00055046935.1">
    <property type="protein sequence ID" value="ENSSSCP00055037438.1"/>
    <property type="gene ID" value="ENSSSCG00055023820.1"/>
</dbReference>
<dbReference type="Ensembl" id="ENSSSCT00060039953.1">
    <property type="protein sequence ID" value="ENSSSCP00060016939.1"/>
    <property type="gene ID" value="ENSSSCG00060029569.1"/>
</dbReference>
<dbReference type="Ensembl" id="ENSSSCT00065085728.1">
    <property type="protein sequence ID" value="ENSSSCP00065037474.1"/>
    <property type="gene ID" value="ENSSSCG00065062470.1"/>
</dbReference>
<dbReference type="Ensembl" id="ENSSSCT00070020149.1">
    <property type="protein sequence ID" value="ENSSSCP00070016752.1"/>
    <property type="gene ID" value="ENSSSCG00070010348.1"/>
</dbReference>
<dbReference type="Ensembl" id="ENSSSCT00070046981.1">
    <property type="protein sequence ID" value="ENSSSCP00070039631.1"/>
    <property type="gene ID" value="ENSSSCG00070023559.1"/>
</dbReference>
<dbReference type="Ensembl" id="ENSSSCT00085002541">
    <property type="protein sequence ID" value="ENSSSCP00085001815"/>
    <property type="gene ID" value="ENSSSCG00085001656"/>
</dbReference>
<dbReference type="Ensembl" id="ENSSSCT00090003629">
    <property type="protein sequence ID" value="ENSSSCP00090002291"/>
    <property type="gene ID" value="ENSSSCG00090002157"/>
</dbReference>
<dbReference type="Ensembl" id="ENSSSCT00105002581">
    <property type="protein sequence ID" value="ENSSSCP00105001888"/>
    <property type="gene ID" value="ENSSSCG00105001355"/>
</dbReference>
<dbReference type="Ensembl" id="ENSSSCT00110015519">
    <property type="protein sequence ID" value="ENSSSCP00110010800"/>
    <property type="gene ID" value="ENSSSCG00110007980"/>
</dbReference>
<dbReference type="Ensembl" id="ENSSSCT00115039907">
    <property type="protein sequence ID" value="ENSSSCP00115037575"/>
    <property type="gene ID" value="ENSSSCG00115022541"/>
</dbReference>
<dbReference type="Ensembl" id="ENSSSCT00130010441">
    <property type="protein sequence ID" value="ENSSSCP00130006883"/>
    <property type="gene ID" value="ENSSSCG00130005617"/>
</dbReference>
<dbReference type="GeneID" id="100736809"/>
<dbReference type="KEGG" id="ssc:100736809"/>
<dbReference type="CTD" id="6144"/>
<dbReference type="eggNOG" id="KOG1732">
    <property type="taxonomic scope" value="Eukaryota"/>
</dbReference>
<dbReference type="GeneTree" id="ENSGT00950000182922"/>
<dbReference type="InParanoid" id="P49666"/>
<dbReference type="OMA" id="INYGDYV"/>
<dbReference type="OrthoDB" id="9868372at2759"/>
<dbReference type="TreeFam" id="TF314640"/>
<dbReference type="Reactome" id="R-SSC-156827">
    <property type="pathway name" value="L13a-mediated translational silencing of Ceruloplasmin expression"/>
</dbReference>
<dbReference type="Reactome" id="R-SSC-1799339">
    <property type="pathway name" value="SRP-dependent cotranslational protein targeting to membrane"/>
</dbReference>
<dbReference type="Reactome" id="R-SSC-6791226">
    <property type="pathway name" value="Major pathway of rRNA processing in the nucleolus and cytosol"/>
</dbReference>
<dbReference type="Reactome" id="R-SSC-72689">
    <property type="pathway name" value="Formation of a pool of free 40S subunits"/>
</dbReference>
<dbReference type="Reactome" id="R-SSC-72706">
    <property type="pathway name" value="GTP hydrolysis and joining of the 60S ribosomal subunit"/>
</dbReference>
<dbReference type="Reactome" id="R-SSC-975956">
    <property type="pathway name" value="Nonsense Mediated Decay (NMD) independent of the Exon Junction Complex (EJC)"/>
</dbReference>
<dbReference type="Reactome" id="R-SSC-975957">
    <property type="pathway name" value="Nonsense Mediated Decay (NMD) enhanced by the Exon Junction Complex (EJC)"/>
</dbReference>
<dbReference type="Proteomes" id="UP000008227">
    <property type="component" value="Chromosome 11"/>
</dbReference>
<dbReference type="Proteomes" id="UP000314985">
    <property type="component" value="Chromosome 11"/>
</dbReference>
<dbReference type="Proteomes" id="UP000314985">
    <property type="component" value="Unassembled WGS sequence"/>
</dbReference>
<dbReference type="Proteomes" id="UP000694570">
    <property type="component" value="Unplaced"/>
</dbReference>
<dbReference type="Proteomes" id="UP000694571">
    <property type="component" value="Unplaced"/>
</dbReference>
<dbReference type="Proteomes" id="UP000694720">
    <property type="component" value="Unplaced"/>
</dbReference>
<dbReference type="Proteomes" id="UP000694722">
    <property type="component" value="Unplaced"/>
</dbReference>
<dbReference type="Proteomes" id="UP000694723">
    <property type="component" value="Unplaced"/>
</dbReference>
<dbReference type="Proteomes" id="UP000694724">
    <property type="component" value="Unplaced"/>
</dbReference>
<dbReference type="Proteomes" id="UP000694725">
    <property type="component" value="Unplaced"/>
</dbReference>
<dbReference type="Proteomes" id="UP000694726">
    <property type="component" value="Unplaced"/>
</dbReference>
<dbReference type="Proteomes" id="UP000694727">
    <property type="component" value="Unplaced"/>
</dbReference>
<dbReference type="Proteomes" id="UP000694728">
    <property type="component" value="Unplaced"/>
</dbReference>
<dbReference type="Bgee" id="ENSSSCG00000009303">
    <property type="expression patterns" value="Expressed in semimembranosus muscle and 44 other cell types or tissues"/>
</dbReference>
<dbReference type="ExpressionAtlas" id="P49666">
    <property type="expression patterns" value="baseline and differential"/>
</dbReference>
<dbReference type="GO" id="GO:0022625">
    <property type="term" value="C:cytosolic large ribosomal subunit"/>
    <property type="evidence" value="ECO:0000318"/>
    <property type="project" value="GO_Central"/>
</dbReference>
<dbReference type="GO" id="GO:0005783">
    <property type="term" value="C:endoplasmic reticulum"/>
    <property type="evidence" value="ECO:0007669"/>
    <property type="project" value="UniProtKB-SubCell"/>
</dbReference>
<dbReference type="GO" id="GO:0031090">
    <property type="term" value="C:organelle membrane"/>
    <property type="evidence" value="ECO:0007669"/>
    <property type="project" value="UniProtKB-ARBA"/>
</dbReference>
<dbReference type="GO" id="GO:0003735">
    <property type="term" value="F:structural constituent of ribosome"/>
    <property type="evidence" value="ECO:0000318"/>
    <property type="project" value="GO_Central"/>
</dbReference>
<dbReference type="GO" id="GO:0006412">
    <property type="term" value="P:translation"/>
    <property type="evidence" value="ECO:0007669"/>
    <property type="project" value="InterPro"/>
</dbReference>
<dbReference type="FunFam" id="2.30.30.70:FF:000001">
    <property type="entry name" value="60S ribosomal protein L21"/>
    <property type="match status" value="1"/>
</dbReference>
<dbReference type="FunFam" id="6.10.250.3260:FF:000001">
    <property type="entry name" value="60S ribosomal protein L21"/>
    <property type="match status" value="1"/>
</dbReference>
<dbReference type="Gene3D" id="6.10.250.3260">
    <property type="match status" value="1"/>
</dbReference>
<dbReference type="Gene3D" id="2.30.30.70">
    <property type="entry name" value="Ribosomal protein L21"/>
    <property type="match status" value="1"/>
</dbReference>
<dbReference type="InterPro" id="IPR001147">
    <property type="entry name" value="Ribosomal_eL21"/>
</dbReference>
<dbReference type="InterPro" id="IPR018259">
    <property type="entry name" value="Ribosomal_eL21_CS"/>
</dbReference>
<dbReference type="InterPro" id="IPR036948">
    <property type="entry name" value="Ribosomal_eL21_sf"/>
</dbReference>
<dbReference type="InterPro" id="IPR008991">
    <property type="entry name" value="Translation_prot_SH3-like_sf"/>
</dbReference>
<dbReference type="PANTHER" id="PTHR20981">
    <property type="entry name" value="60S RIBOSOMAL PROTEIN L21"/>
    <property type="match status" value="1"/>
</dbReference>
<dbReference type="Pfam" id="PF01157">
    <property type="entry name" value="Ribosomal_L21e"/>
    <property type="match status" value="1"/>
</dbReference>
<dbReference type="SUPFAM" id="SSF50104">
    <property type="entry name" value="Translation proteins SH3-like domain"/>
    <property type="match status" value="1"/>
</dbReference>
<dbReference type="PROSITE" id="PS01171">
    <property type="entry name" value="RIBOSOMAL_L21E"/>
    <property type="match status" value="1"/>
</dbReference>
<reference evidence="5" key="1">
    <citation type="submission" date="2016-03" db="EMBL/GenBank/DDBJ databases">
        <authorList>
            <person name="Sun W.-S."/>
            <person name="Lee J.-W."/>
        </authorList>
    </citation>
    <scope>NUCLEOTIDE SEQUENCE [MRNA]</scope>
</reference>
<reference evidence="6" key="2">
    <citation type="submission" date="2009-11" db="EMBL/GenBank/DDBJ databases">
        <authorList>
            <consortium name="Porcine genome sequencing project"/>
        </authorList>
    </citation>
    <scope>NUCLEOTIDE SEQUENCE [LARGE SCALE GENOMIC DNA]</scope>
    <source>
        <strain evidence="6">Duroc</strain>
    </source>
</reference>
<reference key="3">
    <citation type="journal article" date="1996" name="Mamm. Genome">
        <title>Evaluation and characterization of a porcine small intestine cDNA library: analysis of 839 clones.</title>
        <authorList>
            <person name="Winteroe A.K."/>
            <person name="Fredholm M."/>
            <person name="Davies W."/>
        </authorList>
    </citation>
    <scope>NUCLEOTIDE SEQUENCE [LARGE SCALE MRNA] OF 1-62</scope>
    <source>
        <tissue>Small intestine</tissue>
    </source>
</reference>
<reference evidence="7 8 9" key="4">
    <citation type="journal article" date="2014" name="Cell">
        <title>Structure of the mammalian ribosome-Sec61 complex to 3.4 A resolution.</title>
        <authorList>
            <person name="Voorhees R.M."/>
            <person name="Fernandez I.S."/>
            <person name="Scheres S.H."/>
            <person name="Hegde R.S."/>
        </authorList>
    </citation>
    <scope>STRUCTURE BY ELECTRON MICROSCOPY (3.40 ANGSTROMS)</scope>
    <scope>FUNCTION</scope>
    <scope>SUBCELLULAR LOCATION</scope>
    <scope>SUBUNIT</scope>
</reference>
<protein>
    <recommendedName>
        <fullName evidence="4">Large ribosomal subunit protein eL21</fullName>
    </recommendedName>
    <alternativeName>
        <fullName>60S ribosomal protein L21</fullName>
    </alternativeName>
</protein>
<gene>
    <name type="primary">RPL21</name>
</gene>
<name>RL21_PIG</name>
<feature type="chain" id="PRO_0000149671" description="Large ribosomal subunit protein eL21">
    <location>
        <begin position="1"/>
        <end position="160"/>
    </location>
</feature>
<feature type="region of interest" description="Disordered" evidence="2">
    <location>
        <begin position="112"/>
        <end position="145"/>
    </location>
</feature>
<feature type="compositionally biased region" description="Basic and acidic residues" evidence="2">
    <location>
        <begin position="112"/>
        <end position="123"/>
    </location>
</feature>
<feature type="compositionally biased region" description="Basic and acidic residues" evidence="2">
    <location>
        <begin position="136"/>
        <end position="145"/>
    </location>
</feature>
<feature type="sequence conflict" description="In Ref. 3; CAA23212." ref="3">
    <original>M</original>
    <variation>L</variation>
    <location>
        <position position="52"/>
    </location>
</feature>
<comment type="function">
    <text evidence="3">Component of the large ribosomal subunit (PubMed:24930395). The ribosome is a large ribonucleoprotein complex responsible for the synthesis of proteins in the cell (PubMed:24930395).</text>
</comment>
<comment type="subunit">
    <text evidence="3">Component of the large ribosomal subunit.</text>
</comment>
<comment type="subcellular location">
    <subcellularLocation>
        <location evidence="1">Cytoplasm</location>
        <location evidence="1">Cytosol</location>
    </subcellularLocation>
    <subcellularLocation>
        <location evidence="1">Cytoplasm</location>
    </subcellularLocation>
    <subcellularLocation>
        <location evidence="3">Endoplasmic reticulum</location>
    </subcellularLocation>
    <text evidence="1 3">Detected on cytosolic polysomes (By similarity). Detected in ribosomes that are associated with the rough endoplasmic reticulum (PubMed:24930395).</text>
</comment>
<comment type="similarity">
    <text evidence="4">Belongs to the eukaryotic ribosomal protein eL21 family.</text>
</comment>
<evidence type="ECO:0000250" key="1">
    <source>
        <dbReference type="UniProtKB" id="P46778"/>
    </source>
</evidence>
<evidence type="ECO:0000256" key="2">
    <source>
        <dbReference type="SAM" id="MobiDB-lite"/>
    </source>
</evidence>
<evidence type="ECO:0000269" key="3">
    <source>
    </source>
</evidence>
<evidence type="ECO:0000305" key="4"/>
<evidence type="ECO:0000312" key="5">
    <source>
        <dbReference type="EMBL" id="AMR57225.1"/>
    </source>
</evidence>
<evidence type="ECO:0000312" key="6">
    <source>
        <dbReference type="Proteomes" id="UP000008227"/>
    </source>
</evidence>
<evidence type="ECO:0007744" key="7">
    <source>
        <dbReference type="PDB" id="3J7O"/>
    </source>
</evidence>
<evidence type="ECO:0007744" key="8">
    <source>
        <dbReference type="PDB" id="3J7P"/>
    </source>
</evidence>
<evidence type="ECO:0007744" key="9">
    <source>
        <dbReference type="PDB" id="3J7Q"/>
    </source>
</evidence>
<sequence length="160" mass="18565">MTNTKGKRRGTRYMFSRPFRKHGVVPLATYMRIYKKGDIVDIKGMGTVQKGMPHKCYHGKTGRVYNVTQHAVGIVVNKQVKGKILAKRINVRIEHIKHSKSRDSFLKRVKENDQKKKEAKEKGTWVQLKRQPAPPREAHFVRTNGKEPELLEPIPYEFMA</sequence>
<accession>P49666</accession>
<accession>F1RTJ9</accession>
<organism>
    <name type="scientific">Sus scrofa</name>
    <name type="common">Pig</name>
    <dbReference type="NCBI Taxonomy" id="9823"/>
    <lineage>
        <taxon>Eukaryota</taxon>
        <taxon>Metazoa</taxon>
        <taxon>Chordata</taxon>
        <taxon>Craniata</taxon>
        <taxon>Vertebrata</taxon>
        <taxon>Euteleostomi</taxon>
        <taxon>Mammalia</taxon>
        <taxon>Eutheria</taxon>
        <taxon>Laurasiatheria</taxon>
        <taxon>Artiodactyla</taxon>
        <taxon>Suina</taxon>
        <taxon>Suidae</taxon>
        <taxon>Sus</taxon>
    </lineage>
</organism>
<proteinExistence type="evidence at protein level"/>
<keyword id="KW-0002">3D-structure</keyword>
<keyword id="KW-0963">Cytoplasm</keyword>
<keyword id="KW-0256">Endoplasmic reticulum</keyword>
<keyword id="KW-1185">Reference proteome</keyword>
<keyword id="KW-0687">Ribonucleoprotein</keyword>
<keyword id="KW-0689">Ribosomal protein</keyword>